<keyword id="KW-0028">Amino-acid biosynthesis</keyword>
<keyword id="KW-0378">Hydrolase</keyword>
<keyword id="KW-0486">Methionine biosynthesis</keyword>
<keyword id="KW-1185">Reference proteome</keyword>
<comment type="function">
    <text evidence="1 2">Catalyzes the irreversible cleavage of the glycosidic bond in both 5'-methylthioadenosine (MTA) and S-adenosylhomocysteine (SAH/AdoHcy) to adenine and the corresponding thioribose, 5'-methylthioribose and S-ribosylhomocysteine, respectively. Also cleaves 5'-deoxyadenosine, a toxic by-product of radical S-adenosylmethionine (SAM) enzymes, into 5-deoxyribose and adenine (PubMed:31950558). Thus, is required for in vivo function of the radical SAM enzymes biotin synthase and lipoic acid synthase, that are inhibited by 5'-deoxyadenosine accumulation (By similarity). Part of a bifunctional DHAP-shunt salvage pathway for SAM by-products (PubMed:31950558).</text>
</comment>
<comment type="catalytic activity">
    <reaction evidence="1 2">
        <text>S-adenosyl-L-homocysteine + H2O = S-(5-deoxy-D-ribos-5-yl)-L-homocysteine + adenine</text>
        <dbReference type="Rhea" id="RHEA:17805"/>
        <dbReference type="ChEBI" id="CHEBI:15377"/>
        <dbReference type="ChEBI" id="CHEBI:16708"/>
        <dbReference type="ChEBI" id="CHEBI:57856"/>
        <dbReference type="ChEBI" id="CHEBI:58195"/>
        <dbReference type="EC" id="3.2.2.9"/>
    </reaction>
    <physiologicalReaction direction="left-to-right" evidence="2">
        <dbReference type="Rhea" id="RHEA:17806"/>
    </physiologicalReaction>
</comment>
<comment type="catalytic activity">
    <reaction evidence="1 2">
        <text>S-methyl-5'-thioadenosine + H2O = 5-(methylsulfanyl)-D-ribose + adenine</text>
        <dbReference type="Rhea" id="RHEA:13617"/>
        <dbReference type="ChEBI" id="CHEBI:15377"/>
        <dbReference type="ChEBI" id="CHEBI:16708"/>
        <dbReference type="ChEBI" id="CHEBI:17509"/>
        <dbReference type="ChEBI" id="CHEBI:78440"/>
        <dbReference type="EC" id="3.2.2.9"/>
    </reaction>
    <physiologicalReaction direction="left-to-right" evidence="2">
        <dbReference type="Rhea" id="RHEA:13618"/>
    </physiologicalReaction>
</comment>
<comment type="catalytic activity">
    <reaction evidence="1 2">
        <text>5'-deoxyadenosine + H2O = 5-deoxy-D-ribose + adenine</text>
        <dbReference type="Rhea" id="RHEA:29859"/>
        <dbReference type="ChEBI" id="CHEBI:15377"/>
        <dbReference type="ChEBI" id="CHEBI:16708"/>
        <dbReference type="ChEBI" id="CHEBI:17319"/>
        <dbReference type="ChEBI" id="CHEBI:149540"/>
        <dbReference type="EC" id="3.2.2.9"/>
    </reaction>
    <physiologicalReaction direction="left-to-right" evidence="1 2">
        <dbReference type="Rhea" id="RHEA:29860"/>
    </physiologicalReaction>
</comment>
<comment type="biophysicochemical properties">
    <kinetics>
        <KM evidence="2">5.4 uM for S-adenosyl-L-homocysteine</KM>
        <KM evidence="2">0.83 uM for S-methyl-5'-thioadenosine</KM>
        <KM evidence="2">4.7 uM for 5'-deoxyadenosine</KM>
        <KM evidence="2">93 uM for adenine</KM>
        <text evidence="2">kcat is 84 sec(-1) with S-adenosyl-L-homocysteine as substrate. kcat is 150 sec(-1) with S-methyl-5'-thioadenosine as substrate. kcat is 57 sec(-1) with 5'-deoxyadenosine as substrate. kcat is 0.24 sec(-1) with adenine as substrate.</text>
    </kinetics>
</comment>
<comment type="pathway">
    <text evidence="1">Amino-acid biosynthesis; L-methionine biosynthesis via salvage pathway; S-methyl-5-thio-alpha-D-ribose 1-phosphate from S-methyl-5'-thioadenosine (hydrolase route): step 1/2.</text>
</comment>
<comment type="subunit">
    <text evidence="1">Homodimer.</text>
</comment>
<comment type="similarity">
    <text evidence="1">Belongs to the PNP/UDP phosphorylase family. MtnN subfamily.</text>
</comment>
<organism>
    <name type="scientific">Escherichia coli O45:K1 (strain S88 / ExPEC)</name>
    <dbReference type="NCBI Taxonomy" id="585035"/>
    <lineage>
        <taxon>Bacteria</taxon>
        <taxon>Pseudomonadati</taxon>
        <taxon>Pseudomonadota</taxon>
        <taxon>Gammaproteobacteria</taxon>
        <taxon>Enterobacterales</taxon>
        <taxon>Enterobacteriaceae</taxon>
        <taxon>Escherichia</taxon>
    </lineage>
</organism>
<accession>B7MBE2</accession>
<gene>
    <name evidence="1 3" type="primary">mtnN</name>
    <name type="ordered locus">ECS88_0170</name>
</gene>
<evidence type="ECO:0000255" key="1">
    <source>
        <dbReference type="HAMAP-Rule" id="MF_01684"/>
    </source>
</evidence>
<evidence type="ECO:0000269" key="2">
    <source>
    </source>
</evidence>
<evidence type="ECO:0000303" key="3">
    <source>
    </source>
</evidence>
<protein>
    <recommendedName>
        <fullName evidence="1">5'-methylthioadenosine/S-adenosylhomocysteine nucleosidase</fullName>
        <shortName evidence="1">MTA/SAH nucleosidase</shortName>
        <shortName evidence="1">MTAN</shortName>
        <ecNumber evidence="1 2">3.2.2.9</ecNumber>
    </recommendedName>
    <alternativeName>
        <fullName evidence="1">5'-deoxyadenosine nucleosidase</fullName>
        <shortName evidence="1">DOA nucleosidase</shortName>
        <shortName evidence="1">dAdo nucleosidase</shortName>
    </alternativeName>
    <alternativeName>
        <fullName evidence="1">5'-methylthioadenosine nucleosidase</fullName>
        <shortName evidence="1">MTA nucleosidase</shortName>
    </alternativeName>
    <alternativeName>
        <fullName evidence="1">S-adenosylhomocysteine nucleosidase</fullName>
        <shortName evidence="1">AdoHcy nucleosidase</shortName>
        <shortName evidence="1">SAH nucleosidase</shortName>
        <shortName evidence="1">SRH nucleosidase</shortName>
    </alternativeName>
</protein>
<proteinExistence type="evidence at protein level"/>
<dbReference type="EC" id="3.2.2.9" evidence="1 2"/>
<dbReference type="EMBL" id="CU928161">
    <property type="protein sequence ID" value="CAR01535.1"/>
    <property type="molecule type" value="Genomic_DNA"/>
</dbReference>
<dbReference type="RefSeq" id="WP_000689844.1">
    <property type="nucleotide sequence ID" value="NC_011742.1"/>
</dbReference>
<dbReference type="SMR" id="B7MBE2"/>
<dbReference type="GeneID" id="93777267"/>
<dbReference type="KEGG" id="ecz:ECS88_0170"/>
<dbReference type="HOGENOM" id="CLU_031248_2_2_6"/>
<dbReference type="UniPathway" id="UPA00904">
    <property type="reaction ID" value="UER00871"/>
</dbReference>
<dbReference type="Proteomes" id="UP000000747">
    <property type="component" value="Chromosome"/>
</dbReference>
<dbReference type="GO" id="GO:0005829">
    <property type="term" value="C:cytosol"/>
    <property type="evidence" value="ECO:0007669"/>
    <property type="project" value="TreeGrafter"/>
</dbReference>
<dbReference type="GO" id="GO:0008782">
    <property type="term" value="F:adenosylhomocysteine nucleosidase activity"/>
    <property type="evidence" value="ECO:0007669"/>
    <property type="project" value="UniProtKB-UniRule"/>
</dbReference>
<dbReference type="GO" id="GO:0008930">
    <property type="term" value="F:methylthioadenosine nucleosidase activity"/>
    <property type="evidence" value="ECO:0007669"/>
    <property type="project" value="UniProtKB-UniRule"/>
</dbReference>
<dbReference type="GO" id="GO:0019509">
    <property type="term" value="P:L-methionine salvage from methylthioadenosine"/>
    <property type="evidence" value="ECO:0007669"/>
    <property type="project" value="UniProtKB-UniRule"/>
</dbReference>
<dbReference type="GO" id="GO:0019284">
    <property type="term" value="P:L-methionine salvage from S-adenosylmethionine"/>
    <property type="evidence" value="ECO:0007669"/>
    <property type="project" value="TreeGrafter"/>
</dbReference>
<dbReference type="GO" id="GO:0046124">
    <property type="term" value="P:purine deoxyribonucleoside catabolic process"/>
    <property type="evidence" value="ECO:0007669"/>
    <property type="project" value="UniProtKB-UniRule"/>
</dbReference>
<dbReference type="CDD" id="cd09008">
    <property type="entry name" value="MTAN"/>
    <property type="match status" value="1"/>
</dbReference>
<dbReference type="FunFam" id="3.40.50.1580:FF:000001">
    <property type="entry name" value="MTA/SAH nucleosidase family protein"/>
    <property type="match status" value="1"/>
</dbReference>
<dbReference type="Gene3D" id="3.40.50.1580">
    <property type="entry name" value="Nucleoside phosphorylase domain"/>
    <property type="match status" value="1"/>
</dbReference>
<dbReference type="HAMAP" id="MF_01684">
    <property type="entry name" value="Salvage_MtnN"/>
    <property type="match status" value="1"/>
</dbReference>
<dbReference type="InterPro" id="IPR010049">
    <property type="entry name" value="MTA_SAH_Nsdase"/>
</dbReference>
<dbReference type="InterPro" id="IPR000845">
    <property type="entry name" value="Nucleoside_phosphorylase_d"/>
</dbReference>
<dbReference type="InterPro" id="IPR035994">
    <property type="entry name" value="Nucleoside_phosphorylase_sf"/>
</dbReference>
<dbReference type="NCBIfam" id="TIGR01704">
    <property type="entry name" value="MTA_SAH-Nsdase"/>
    <property type="match status" value="1"/>
</dbReference>
<dbReference type="NCBIfam" id="NF004079">
    <property type="entry name" value="PRK05584.1"/>
    <property type="match status" value="1"/>
</dbReference>
<dbReference type="PANTHER" id="PTHR46832">
    <property type="entry name" value="5'-METHYLTHIOADENOSINE/S-ADENOSYLHOMOCYSTEINE NUCLEOSIDASE"/>
    <property type="match status" value="1"/>
</dbReference>
<dbReference type="PANTHER" id="PTHR46832:SF1">
    <property type="entry name" value="5'-METHYLTHIOADENOSINE_S-ADENOSYLHOMOCYSTEINE NUCLEOSIDASE"/>
    <property type="match status" value="1"/>
</dbReference>
<dbReference type="Pfam" id="PF01048">
    <property type="entry name" value="PNP_UDP_1"/>
    <property type="match status" value="1"/>
</dbReference>
<dbReference type="SUPFAM" id="SSF53167">
    <property type="entry name" value="Purine and uridine phosphorylases"/>
    <property type="match status" value="1"/>
</dbReference>
<sequence length="232" mass="24354">MKIGIIGAMEEEVTLLRDKIENRQTISLGGCEIYTGQLNGTEVALLKSGIGKVAAALGATLLLEHCKPDVIINTGSAGGLAPTLKVGDIVVSDEARYHDADVTAFGYEYGQLPGCPAGFKADDKLIAAAEACIAELNLNAVRGLIVSGDAFINGSVGLAKIRHNFPQAIAVEMEATAIAHVCHNFNVPFVVVRAISDVADQQSHLSFDEFLAVAAKQSSLMVESLVQKLAHG</sequence>
<name>MTNN_ECO45</name>
<feature type="chain" id="PRO_1000187417" description="5'-methylthioadenosine/S-adenosylhomocysteine nucleosidase">
    <location>
        <begin position="1"/>
        <end position="232"/>
    </location>
</feature>
<feature type="active site" description="Proton acceptor" evidence="1">
    <location>
        <position position="12"/>
    </location>
</feature>
<feature type="active site" description="Proton donor" evidence="1">
    <location>
        <position position="197"/>
    </location>
</feature>
<feature type="binding site" evidence="1">
    <location>
        <position position="78"/>
    </location>
    <ligand>
        <name>substrate</name>
    </ligand>
</feature>
<feature type="binding site" evidence="1">
    <location>
        <position position="152"/>
    </location>
    <ligand>
        <name>substrate</name>
    </ligand>
</feature>
<feature type="binding site" evidence="1">
    <location>
        <begin position="173"/>
        <end position="174"/>
    </location>
    <ligand>
        <name>substrate</name>
    </ligand>
</feature>
<reference key="1">
    <citation type="journal article" date="2009" name="PLoS Genet.">
        <title>Organised genome dynamics in the Escherichia coli species results in highly diverse adaptive paths.</title>
        <authorList>
            <person name="Touchon M."/>
            <person name="Hoede C."/>
            <person name="Tenaillon O."/>
            <person name="Barbe V."/>
            <person name="Baeriswyl S."/>
            <person name="Bidet P."/>
            <person name="Bingen E."/>
            <person name="Bonacorsi S."/>
            <person name="Bouchier C."/>
            <person name="Bouvet O."/>
            <person name="Calteau A."/>
            <person name="Chiapello H."/>
            <person name="Clermont O."/>
            <person name="Cruveiller S."/>
            <person name="Danchin A."/>
            <person name="Diard M."/>
            <person name="Dossat C."/>
            <person name="Karoui M.E."/>
            <person name="Frapy E."/>
            <person name="Garry L."/>
            <person name="Ghigo J.M."/>
            <person name="Gilles A.M."/>
            <person name="Johnson J."/>
            <person name="Le Bouguenec C."/>
            <person name="Lescat M."/>
            <person name="Mangenot S."/>
            <person name="Martinez-Jehanne V."/>
            <person name="Matic I."/>
            <person name="Nassif X."/>
            <person name="Oztas S."/>
            <person name="Petit M.A."/>
            <person name="Pichon C."/>
            <person name="Rouy Z."/>
            <person name="Ruf C.S."/>
            <person name="Schneider D."/>
            <person name="Tourret J."/>
            <person name="Vacherie B."/>
            <person name="Vallenet D."/>
            <person name="Medigue C."/>
            <person name="Rocha E.P.C."/>
            <person name="Denamur E."/>
        </authorList>
    </citation>
    <scope>NUCLEOTIDE SEQUENCE [LARGE SCALE GENOMIC DNA]</scope>
    <source>
        <strain>S88 / ExPEC</strain>
    </source>
</reference>
<reference key="2">
    <citation type="journal article" date="2020" name="Mol. Microbiol.">
        <title>A bifunctional salvage pathway for two distinct S-adenosylmethionine by-products that is widespread in bacteria, including pathogenic Escherichia coli.</title>
        <authorList>
            <person name="North J.A."/>
            <person name="Wildenthal J.A."/>
            <person name="Erb T.J."/>
            <person name="Evans B.S."/>
            <person name="Byerly K.M."/>
            <person name="Gerlt J.A."/>
            <person name="Tabita F.R."/>
        </authorList>
    </citation>
    <scope>FUNCTION</scope>
    <scope>CATALYTIC ACTIVITY</scope>
    <scope>BIOPHYSICOCHEMICAL PROPERTIES</scope>
    <source>
        <strain>ATCC 25922 / DSM 1103 / NCIB 12210 / ExPEC</strain>
    </source>
</reference>